<evidence type="ECO:0000255" key="1">
    <source>
        <dbReference type="HAMAP-Rule" id="MF_00040"/>
    </source>
</evidence>
<comment type="function">
    <text evidence="1">Responsible for the release of ribosomes from messenger RNA at the termination of protein biosynthesis. May increase the efficiency of translation by recycling ribosomes from one round of translation to another.</text>
</comment>
<comment type="subcellular location">
    <subcellularLocation>
        <location evidence="1">Cytoplasm</location>
    </subcellularLocation>
</comment>
<comment type="similarity">
    <text evidence="1">Belongs to the RRF family.</text>
</comment>
<proteinExistence type="inferred from homology"/>
<protein>
    <recommendedName>
        <fullName evidence="1">Ribosome-recycling factor</fullName>
        <shortName evidence="1">RRF</shortName>
    </recommendedName>
    <alternativeName>
        <fullName evidence="1">Ribosome-releasing factor</fullName>
    </alternativeName>
</protein>
<keyword id="KW-0963">Cytoplasm</keyword>
<keyword id="KW-0648">Protein biosynthesis</keyword>
<keyword id="KW-1185">Reference proteome</keyword>
<sequence length="185" mass="21214">MTKEIIKDAEERMKKAVEVFRQELAGMRANRATPALLDKVRVEAYGSEVPVNNVATIEVPDPRTLVIKPWDRSLIKAIERAINASDLGLNPTNDGQVIRLSIPPMTEERRRELVKVVAKRTEEQRVAIRNIRRDANEQIKKLEKDKAVSEDESKRAQDEVQKLTDKYIKEVDQLMAAKEKEIMEV</sequence>
<feature type="chain" id="PRO_0000167560" description="Ribosome-recycling factor">
    <location>
        <begin position="1"/>
        <end position="185"/>
    </location>
</feature>
<gene>
    <name evidence="1" type="primary">frr</name>
    <name type="ordered locus">STH1494</name>
</gene>
<name>RRF_SYMTH</name>
<organism>
    <name type="scientific">Symbiobacterium thermophilum (strain DSM 24528 / JCM 14929 / IAM 14863 / T)</name>
    <dbReference type="NCBI Taxonomy" id="292459"/>
    <lineage>
        <taxon>Bacteria</taxon>
        <taxon>Bacillati</taxon>
        <taxon>Bacillota</taxon>
        <taxon>Clostridia</taxon>
        <taxon>Eubacteriales</taxon>
        <taxon>Symbiobacteriaceae</taxon>
        <taxon>Symbiobacterium</taxon>
    </lineage>
</organism>
<accession>Q67PB4</accession>
<dbReference type="EMBL" id="AP006840">
    <property type="protein sequence ID" value="BAD40479.1"/>
    <property type="molecule type" value="Genomic_DNA"/>
</dbReference>
<dbReference type="RefSeq" id="WP_011195624.1">
    <property type="nucleotide sequence ID" value="NC_006177.1"/>
</dbReference>
<dbReference type="SMR" id="Q67PB4"/>
<dbReference type="STRING" id="292459.STH1494"/>
<dbReference type="KEGG" id="sth:STH1494"/>
<dbReference type="eggNOG" id="COG0233">
    <property type="taxonomic scope" value="Bacteria"/>
</dbReference>
<dbReference type="HOGENOM" id="CLU_073981_2_0_9"/>
<dbReference type="OrthoDB" id="9804006at2"/>
<dbReference type="Proteomes" id="UP000000417">
    <property type="component" value="Chromosome"/>
</dbReference>
<dbReference type="GO" id="GO:0005737">
    <property type="term" value="C:cytoplasm"/>
    <property type="evidence" value="ECO:0007669"/>
    <property type="project" value="UniProtKB-SubCell"/>
</dbReference>
<dbReference type="GO" id="GO:0043023">
    <property type="term" value="F:ribosomal large subunit binding"/>
    <property type="evidence" value="ECO:0007669"/>
    <property type="project" value="TreeGrafter"/>
</dbReference>
<dbReference type="GO" id="GO:0006415">
    <property type="term" value="P:translational termination"/>
    <property type="evidence" value="ECO:0007669"/>
    <property type="project" value="UniProtKB-UniRule"/>
</dbReference>
<dbReference type="CDD" id="cd00520">
    <property type="entry name" value="RRF"/>
    <property type="match status" value="1"/>
</dbReference>
<dbReference type="FunFam" id="1.10.132.20:FF:000001">
    <property type="entry name" value="Ribosome-recycling factor"/>
    <property type="match status" value="1"/>
</dbReference>
<dbReference type="FunFam" id="3.30.1360.40:FF:000001">
    <property type="entry name" value="Ribosome-recycling factor"/>
    <property type="match status" value="1"/>
</dbReference>
<dbReference type="Gene3D" id="3.30.1360.40">
    <property type="match status" value="1"/>
</dbReference>
<dbReference type="Gene3D" id="1.10.132.20">
    <property type="entry name" value="Ribosome-recycling factor"/>
    <property type="match status" value="1"/>
</dbReference>
<dbReference type="HAMAP" id="MF_00040">
    <property type="entry name" value="RRF"/>
    <property type="match status" value="1"/>
</dbReference>
<dbReference type="InterPro" id="IPR002661">
    <property type="entry name" value="Ribosome_recyc_fac"/>
</dbReference>
<dbReference type="InterPro" id="IPR023584">
    <property type="entry name" value="Ribosome_recyc_fac_dom"/>
</dbReference>
<dbReference type="InterPro" id="IPR036191">
    <property type="entry name" value="RRF_sf"/>
</dbReference>
<dbReference type="NCBIfam" id="TIGR00496">
    <property type="entry name" value="frr"/>
    <property type="match status" value="1"/>
</dbReference>
<dbReference type="PANTHER" id="PTHR20982:SF3">
    <property type="entry name" value="MITOCHONDRIAL RIBOSOME RECYCLING FACTOR PSEUDO 1"/>
    <property type="match status" value="1"/>
</dbReference>
<dbReference type="PANTHER" id="PTHR20982">
    <property type="entry name" value="RIBOSOME RECYCLING FACTOR"/>
    <property type="match status" value="1"/>
</dbReference>
<dbReference type="Pfam" id="PF01765">
    <property type="entry name" value="RRF"/>
    <property type="match status" value="1"/>
</dbReference>
<dbReference type="SUPFAM" id="SSF55194">
    <property type="entry name" value="Ribosome recycling factor, RRF"/>
    <property type="match status" value="1"/>
</dbReference>
<reference key="1">
    <citation type="journal article" date="2004" name="Nucleic Acids Res.">
        <title>Genome sequence of Symbiobacterium thermophilum, an uncultivable bacterium that depends on microbial commensalism.</title>
        <authorList>
            <person name="Ueda K."/>
            <person name="Yamashita A."/>
            <person name="Ishikawa J."/>
            <person name="Shimada M."/>
            <person name="Watsuji T."/>
            <person name="Morimura K."/>
            <person name="Ikeda H."/>
            <person name="Hattori M."/>
            <person name="Beppu T."/>
        </authorList>
    </citation>
    <scope>NUCLEOTIDE SEQUENCE [LARGE SCALE GENOMIC DNA]</scope>
    <source>
        <strain>DSM 24528 / JCM 14929 / IAM 14863 / T</strain>
    </source>
</reference>